<name>ARLY_CORJK</name>
<comment type="catalytic activity">
    <reaction evidence="1">
        <text>2-(N(omega)-L-arginino)succinate = fumarate + L-arginine</text>
        <dbReference type="Rhea" id="RHEA:24020"/>
        <dbReference type="ChEBI" id="CHEBI:29806"/>
        <dbReference type="ChEBI" id="CHEBI:32682"/>
        <dbReference type="ChEBI" id="CHEBI:57472"/>
        <dbReference type="EC" id="4.3.2.1"/>
    </reaction>
</comment>
<comment type="pathway">
    <text evidence="1">Amino-acid biosynthesis; L-arginine biosynthesis; L-arginine from L-ornithine and carbamoyl phosphate: step 3/3.</text>
</comment>
<comment type="subcellular location">
    <subcellularLocation>
        <location evidence="1">Cytoplasm</location>
    </subcellularLocation>
</comment>
<comment type="similarity">
    <text evidence="1">Belongs to the lyase 1 family. Argininosuccinate lyase subfamily.</text>
</comment>
<feature type="chain" id="PRO_0000240722" description="Argininosuccinate lyase">
    <location>
        <begin position="1"/>
        <end position="488"/>
    </location>
</feature>
<dbReference type="EC" id="4.3.2.1" evidence="1"/>
<dbReference type="EMBL" id="CR931997">
    <property type="protein sequence ID" value="CAI37010.1"/>
    <property type="molecule type" value="Genomic_DNA"/>
</dbReference>
<dbReference type="SMR" id="Q4JVZ7"/>
<dbReference type="STRING" id="306537.jk0848"/>
<dbReference type="KEGG" id="cjk:jk0848"/>
<dbReference type="PATRIC" id="fig|306537.10.peg.859"/>
<dbReference type="eggNOG" id="COG0165">
    <property type="taxonomic scope" value="Bacteria"/>
</dbReference>
<dbReference type="HOGENOM" id="CLU_027272_2_2_11"/>
<dbReference type="OrthoDB" id="9769623at2"/>
<dbReference type="UniPathway" id="UPA00068">
    <property type="reaction ID" value="UER00114"/>
</dbReference>
<dbReference type="Proteomes" id="UP000000545">
    <property type="component" value="Chromosome"/>
</dbReference>
<dbReference type="GO" id="GO:0005829">
    <property type="term" value="C:cytosol"/>
    <property type="evidence" value="ECO:0007669"/>
    <property type="project" value="TreeGrafter"/>
</dbReference>
<dbReference type="GO" id="GO:0004056">
    <property type="term" value="F:argininosuccinate lyase activity"/>
    <property type="evidence" value="ECO:0007669"/>
    <property type="project" value="UniProtKB-UniRule"/>
</dbReference>
<dbReference type="GO" id="GO:0042450">
    <property type="term" value="P:arginine biosynthetic process via ornithine"/>
    <property type="evidence" value="ECO:0007669"/>
    <property type="project" value="InterPro"/>
</dbReference>
<dbReference type="GO" id="GO:0006526">
    <property type="term" value="P:L-arginine biosynthetic process"/>
    <property type="evidence" value="ECO:0007669"/>
    <property type="project" value="UniProtKB-UniRule"/>
</dbReference>
<dbReference type="CDD" id="cd01359">
    <property type="entry name" value="Argininosuccinate_lyase"/>
    <property type="match status" value="1"/>
</dbReference>
<dbReference type="FunFam" id="1.10.40.30:FF:000001">
    <property type="entry name" value="Argininosuccinate lyase"/>
    <property type="match status" value="1"/>
</dbReference>
<dbReference type="FunFam" id="1.20.200.10:FF:000015">
    <property type="entry name" value="argininosuccinate lyase isoform X2"/>
    <property type="match status" value="1"/>
</dbReference>
<dbReference type="Gene3D" id="1.10.40.30">
    <property type="entry name" value="Fumarase/aspartase (C-terminal domain)"/>
    <property type="match status" value="1"/>
</dbReference>
<dbReference type="Gene3D" id="1.20.200.10">
    <property type="entry name" value="Fumarase/aspartase (Central domain)"/>
    <property type="match status" value="1"/>
</dbReference>
<dbReference type="Gene3D" id="1.10.275.10">
    <property type="entry name" value="Fumarase/aspartase (N-terminal domain)"/>
    <property type="match status" value="1"/>
</dbReference>
<dbReference type="HAMAP" id="MF_00006">
    <property type="entry name" value="Arg_succ_lyase"/>
    <property type="match status" value="1"/>
</dbReference>
<dbReference type="InterPro" id="IPR029419">
    <property type="entry name" value="Arg_succ_lyase_C"/>
</dbReference>
<dbReference type="InterPro" id="IPR009049">
    <property type="entry name" value="Argininosuccinate_lyase"/>
</dbReference>
<dbReference type="InterPro" id="IPR024083">
    <property type="entry name" value="Fumarase/histidase_N"/>
</dbReference>
<dbReference type="InterPro" id="IPR020557">
    <property type="entry name" value="Fumarate_lyase_CS"/>
</dbReference>
<dbReference type="InterPro" id="IPR000362">
    <property type="entry name" value="Fumarate_lyase_fam"/>
</dbReference>
<dbReference type="InterPro" id="IPR022761">
    <property type="entry name" value="Fumarate_lyase_N"/>
</dbReference>
<dbReference type="InterPro" id="IPR008948">
    <property type="entry name" value="L-Aspartase-like"/>
</dbReference>
<dbReference type="NCBIfam" id="TIGR00838">
    <property type="entry name" value="argH"/>
    <property type="match status" value="1"/>
</dbReference>
<dbReference type="PANTHER" id="PTHR43814">
    <property type="entry name" value="ARGININOSUCCINATE LYASE"/>
    <property type="match status" value="1"/>
</dbReference>
<dbReference type="PANTHER" id="PTHR43814:SF1">
    <property type="entry name" value="ARGININOSUCCINATE LYASE"/>
    <property type="match status" value="1"/>
</dbReference>
<dbReference type="Pfam" id="PF14698">
    <property type="entry name" value="ASL_C2"/>
    <property type="match status" value="1"/>
</dbReference>
<dbReference type="Pfam" id="PF00206">
    <property type="entry name" value="Lyase_1"/>
    <property type="match status" value="1"/>
</dbReference>
<dbReference type="PRINTS" id="PR00145">
    <property type="entry name" value="ARGSUCLYASE"/>
</dbReference>
<dbReference type="PRINTS" id="PR00149">
    <property type="entry name" value="FUMRATELYASE"/>
</dbReference>
<dbReference type="SUPFAM" id="SSF48557">
    <property type="entry name" value="L-aspartase-like"/>
    <property type="match status" value="1"/>
</dbReference>
<dbReference type="PROSITE" id="PS00163">
    <property type="entry name" value="FUMARATE_LYASES"/>
    <property type="match status" value="1"/>
</dbReference>
<accession>Q4JVZ7</accession>
<evidence type="ECO:0000255" key="1">
    <source>
        <dbReference type="HAMAP-Rule" id="MF_00006"/>
    </source>
</evidence>
<keyword id="KW-0028">Amino-acid biosynthesis</keyword>
<keyword id="KW-0055">Arginine biosynthesis</keyword>
<keyword id="KW-0963">Cytoplasm</keyword>
<keyword id="KW-0456">Lyase</keyword>
<keyword id="KW-1185">Reference proteome</keyword>
<reference key="1">
    <citation type="journal article" date="2005" name="J. Bacteriol.">
        <title>Complete genome sequence and analysis of the multiresistant nosocomial pathogen Corynebacterium jeikeium K411, a lipid-requiring bacterium of the human skin flora.</title>
        <authorList>
            <person name="Tauch A."/>
            <person name="Kaiser O."/>
            <person name="Hain T."/>
            <person name="Goesmann A."/>
            <person name="Weisshaar B."/>
            <person name="Albersmeier A."/>
            <person name="Bekel T."/>
            <person name="Bischoff N."/>
            <person name="Brune I."/>
            <person name="Chakraborty T."/>
            <person name="Kalinowski J."/>
            <person name="Meyer F."/>
            <person name="Rupp O."/>
            <person name="Schneiker S."/>
            <person name="Viehoever P."/>
            <person name="Puehler A."/>
        </authorList>
    </citation>
    <scope>NUCLEOTIDE SEQUENCE [LARGE SCALE GENOMIC DNA]</scope>
    <source>
        <strain>K411</strain>
    </source>
</reference>
<organism>
    <name type="scientific">Corynebacterium jeikeium (strain K411)</name>
    <dbReference type="NCBI Taxonomy" id="306537"/>
    <lineage>
        <taxon>Bacteria</taxon>
        <taxon>Bacillati</taxon>
        <taxon>Actinomycetota</taxon>
        <taxon>Actinomycetes</taxon>
        <taxon>Mycobacteriales</taxon>
        <taxon>Corynebacteriaceae</taxon>
        <taxon>Corynebacterium</taxon>
    </lineage>
</organism>
<proteinExistence type="inferred from homology"/>
<sequence>MADHGASNPGSLDKHGTNEGALWGGRFSGGPSEAMFALSVSTHFDWVLAPYDVLASKAHAKVLNKAGLLSDADLETMLGGLDQLGRDVADGSFVPASSDEDVHGAMERGLIDRVGPEVGGRLRAGRSRNDQVAAMFRMWIRDAIRDIAVQVTQLIDALSEQAKAHPDAIMPGKTHSQAAQPILLAHSLLAHAQPLLRDIQRLQDLDKRLAVSPYGSGALAGSSLKLDPEAIAEELGFDSAADNSLDGTSSRDFASETAFVLAQIAVDMSRLAEEIIYWCTPEYGYVTLSDSWSTGSSIMPQKKNPDVPELVRGKTGRLIGNLSGLMATLKGLPLAYNRDLQEDKEPIVDSVAQLNLLLPAMTGLVSTLTFHENRMRELAPAGFTLATDLAEWMVRQGVPFREAHEASGSCVRIAESRGVDLIDLTDEELASVDSRLTPEVREVLTIDGAVASRSTRGGTAGVRVAEQRERVEKLSGELRGWAETPVRG</sequence>
<gene>
    <name evidence="1" type="primary">argH</name>
    <name type="ordered locus">jk0848</name>
</gene>
<protein>
    <recommendedName>
        <fullName evidence="1">Argininosuccinate lyase</fullName>
        <shortName evidence="1">ASAL</shortName>
        <ecNumber evidence="1">4.3.2.1</ecNumber>
    </recommendedName>
    <alternativeName>
        <fullName evidence="1">Arginosuccinase</fullName>
    </alternativeName>
</protein>